<organism>
    <name type="scientific">Nitrobacter winogradskyi (strain ATCC 25391 / DSM 10237 / CIP 104748 / NCIMB 11846 / Nb-255)</name>
    <dbReference type="NCBI Taxonomy" id="323098"/>
    <lineage>
        <taxon>Bacteria</taxon>
        <taxon>Pseudomonadati</taxon>
        <taxon>Pseudomonadota</taxon>
        <taxon>Alphaproteobacteria</taxon>
        <taxon>Hyphomicrobiales</taxon>
        <taxon>Nitrobacteraceae</taxon>
        <taxon>Nitrobacter</taxon>
    </lineage>
</organism>
<keyword id="KW-0963">Cytoplasm</keyword>
<keyword id="KW-0489">Methyltransferase</keyword>
<keyword id="KW-1185">Reference proteome</keyword>
<keyword id="KW-0949">S-adenosyl-L-methionine</keyword>
<keyword id="KW-0808">Transferase</keyword>
<keyword id="KW-0819">tRNA processing</keyword>
<comment type="function">
    <text evidence="1">Specifically methylates guanosine-37 in various tRNAs.</text>
</comment>
<comment type="catalytic activity">
    <reaction evidence="1">
        <text>guanosine(37) in tRNA + S-adenosyl-L-methionine = N(1)-methylguanosine(37) in tRNA + S-adenosyl-L-homocysteine + H(+)</text>
        <dbReference type="Rhea" id="RHEA:36899"/>
        <dbReference type="Rhea" id="RHEA-COMP:10145"/>
        <dbReference type="Rhea" id="RHEA-COMP:10147"/>
        <dbReference type="ChEBI" id="CHEBI:15378"/>
        <dbReference type="ChEBI" id="CHEBI:57856"/>
        <dbReference type="ChEBI" id="CHEBI:59789"/>
        <dbReference type="ChEBI" id="CHEBI:73542"/>
        <dbReference type="ChEBI" id="CHEBI:74269"/>
        <dbReference type="EC" id="2.1.1.228"/>
    </reaction>
</comment>
<comment type="subunit">
    <text evidence="1">Homodimer.</text>
</comment>
<comment type="subcellular location">
    <subcellularLocation>
        <location evidence="1">Cytoplasm</location>
    </subcellularLocation>
</comment>
<comment type="similarity">
    <text evidence="1">Belongs to the RNA methyltransferase TrmD family.</text>
</comment>
<name>TRMD_NITWN</name>
<accession>Q3SNV6</accession>
<evidence type="ECO:0000255" key="1">
    <source>
        <dbReference type="HAMAP-Rule" id="MF_00605"/>
    </source>
</evidence>
<evidence type="ECO:0000256" key="2">
    <source>
        <dbReference type="SAM" id="MobiDB-lite"/>
    </source>
</evidence>
<gene>
    <name evidence="1" type="primary">trmD</name>
    <name type="ordered locus">Nwi_2782</name>
</gene>
<sequence>MTWRATVLTLFPEMFPGPLGISLAGKALAARLWALDIRDIRNSATDRHRSVDDTPAGGGPGMVLRADVLARAIDAAETPPGAPLLLMSPRGRPLTQSRVAELAAGPGPLIVCGRFEGVDQRIIDARGLDEISIGDYVLSGGEIAAMALIDACVRLLPGVMGKAESGEDESFSHGLLEYPQYTRPQEFEGRVIPDILLSGDHAKVAGWRRAEAEALTQERRPDLWAARATQNPPERKTNG</sequence>
<feature type="chain" id="PRO_0000257440" description="tRNA (guanine-N(1)-)-methyltransferase">
    <location>
        <begin position="1"/>
        <end position="239"/>
    </location>
</feature>
<feature type="region of interest" description="Disordered" evidence="2">
    <location>
        <begin position="218"/>
        <end position="239"/>
    </location>
</feature>
<feature type="binding site" evidence="1">
    <location>
        <position position="113"/>
    </location>
    <ligand>
        <name>S-adenosyl-L-methionine</name>
        <dbReference type="ChEBI" id="CHEBI:59789"/>
    </ligand>
</feature>
<feature type="binding site" evidence="1">
    <location>
        <begin position="133"/>
        <end position="138"/>
    </location>
    <ligand>
        <name>S-adenosyl-L-methionine</name>
        <dbReference type="ChEBI" id="CHEBI:59789"/>
    </ligand>
</feature>
<proteinExistence type="inferred from homology"/>
<dbReference type="EC" id="2.1.1.228" evidence="1"/>
<dbReference type="EMBL" id="CP000115">
    <property type="protein sequence ID" value="ABA06035.1"/>
    <property type="molecule type" value="Genomic_DNA"/>
</dbReference>
<dbReference type="RefSeq" id="WP_011315980.1">
    <property type="nucleotide sequence ID" value="NC_007406.1"/>
</dbReference>
<dbReference type="SMR" id="Q3SNV6"/>
<dbReference type="STRING" id="323098.Nwi_2782"/>
<dbReference type="KEGG" id="nwi:Nwi_2782"/>
<dbReference type="eggNOG" id="COG0336">
    <property type="taxonomic scope" value="Bacteria"/>
</dbReference>
<dbReference type="HOGENOM" id="CLU_047363_0_1_5"/>
<dbReference type="OrthoDB" id="9807416at2"/>
<dbReference type="Proteomes" id="UP000002531">
    <property type="component" value="Chromosome"/>
</dbReference>
<dbReference type="GO" id="GO:0005829">
    <property type="term" value="C:cytosol"/>
    <property type="evidence" value="ECO:0007669"/>
    <property type="project" value="TreeGrafter"/>
</dbReference>
<dbReference type="GO" id="GO:0052906">
    <property type="term" value="F:tRNA (guanine(37)-N1)-methyltransferase activity"/>
    <property type="evidence" value="ECO:0007669"/>
    <property type="project" value="UniProtKB-UniRule"/>
</dbReference>
<dbReference type="GO" id="GO:0002939">
    <property type="term" value="P:tRNA N1-guanine methylation"/>
    <property type="evidence" value="ECO:0007669"/>
    <property type="project" value="TreeGrafter"/>
</dbReference>
<dbReference type="CDD" id="cd18080">
    <property type="entry name" value="TrmD-like"/>
    <property type="match status" value="1"/>
</dbReference>
<dbReference type="FunFam" id="3.40.1280.10:FF:000001">
    <property type="entry name" value="tRNA (guanine-N(1)-)-methyltransferase"/>
    <property type="match status" value="1"/>
</dbReference>
<dbReference type="Gene3D" id="3.40.1280.10">
    <property type="match status" value="1"/>
</dbReference>
<dbReference type="Gene3D" id="1.10.1270.20">
    <property type="entry name" value="tRNA(m1g37)methyltransferase, domain 2"/>
    <property type="match status" value="1"/>
</dbReference>
<dbReference type="HAMAP" id="MF_00605">
    <property type="entry name" value="TrmD"/>
    <property type="match status" value="1"/>
</dbReference>
<dbReference type="InterPro" id="IPR029028">
    <property type="entry name" value="Alpha/beta_knot_MTases"/>
</dbReference>
<dbReference type="InterPro" id="IPR023148">
    <property type="entry name" value="tRNA_m1G_MeTrfase_C_sf"/>
</dbReference>
<dbReference type="InterPro" id="IPR002649">
    <property type="entry name" value="tRNA_m1G_MeTrfase_TrmD"/>
</dbReference>
<dbReference type="InterPro" id="IPR029026">
    <property type="entry name" value="tRNA_m1G_MTases_N"/>
</dbReference>
<dbReference type="InterPro" id="IPR016009">
    <property type="entry name" value="tRNA_MeTrfase_TRMD/TRM10"/>
</dbReference>
<dbReference type="NCBIfam" id="NF000648">
    <property type="entry name" value="PRK00026.1"/>
    <property type="match status" value="1"/>
</dbReference>
<dbReference type="NCBIfam" id="TIGR00088">
    <property type="entry name" value="trmD"/>
    <property type="match status" value="1"/>
</dbReference>
<dbReference type="PANTHER" id="PTHR46417">
    <property type="entry name" value="TRNA (GUANINE-N(1)-)-METHYLTRANSFERASE"/>
    <property type="match status" value="1"/>
</dbReference>
<dbReference type="PANTHER" id="PTHR46417:SF1">
    <property type="entry name" value="TRNA (GUANINE-N(1)-)-METHYLTRANSFERASE"/>
    <property type="match status" value="1"/>
</dbReference>
<dbReference type="Pfam" id="PF01746">
    <property type="entry name" value="tRNA_m1G_MT"/>
    <property type="match status" value="1"/>
</dbReference>
<dbReference type="PIRSF" id="PIRSF000386">
    <property type="entry name" value="tRNA_mtase"/>
    <property type="match status" value="1"/>
</dbReference>
<dbReference type="SUPFAM" id="SSF75217">
    <property type="entry name" value="alpha/beta knot"/>
    <property type="match status" value="1"/>
</dbReference>
<reference key="1">
    <citation type="journal article" date="2006" name="Appl. Environ. Microbiol.">
        <title>Genome sequence of the chemolithoautotrophic nitrite-oxidizing bacterium Nitrobacter winogradskyi Nb-255.</title>
        <authorList>
            <person name="Starkenburg S.R."/>
            <person name="Chain P.S.G."/>
            <person name="Sayavedra-Soto L.A."/>
            <person name="Hauser L."/>
            <person name="Land M.L."/>
            <person name="Larimer F.W."/>
            <person name="Malfatti S.A."/>
            <person name="Klotz M.G."/>
            <person name="Bottomley P.J."/>
            <person name="Arp D.J."/>
            <person name="Hickey W.J."/>
        </authorList>
    </citation>
    <scope>NUCLEOTIDE SEQUENCE [LARGE SCALE GENOMIC DNA]</scope>
    <source>
        <strain>ATCC 25391 / DSM 10237 / CIP 104748 / NCIMB 11846 / Nb-255</strain>
    </source>
</reference>
<protein>
    <recommendedName>
        <fullName evidence="1">tRNA (guanine-N(1)-)-methyltransferase</fullName>
        <ecNumber evidence="1">2.1.1.228</ecNumber>
    </recommendedName>
    <alternativeName>
        <fullName evidence="1">M1G-methyltransferase</fullName>
    </alternativeName>
    <alternativeName>
        <fullName evidence="1">tRNA [GM37] methyltransferase</fullName>
    </alternativeName>
</protein>